<proteinExistence type="inferred from homology"/>
<evidence type="ECO:0000255" key="1">
    <source>
        <dbReference type="HAMAP-Rule" id="MF_01310"/>
    </source>
</evidence>
<evidence type="ECO:0000305" key="2"/>
<dbReference type="EMBL" id="BX571661">
    <property type="protein sequence ID" value="CAE10721.1"/>
    <property type="molecule type" value="Genomic_DNA"/>
</dbReference>
<dbReference type="RefSeq" id="WP_011139505.1">
    <property type="nucleotide sequence ID" value="NC_005090.1"/>
</dbReference>
<dbReference type="SMR" id="Q7M8F5"/>
<dbReference type="STRING" id="273121.WS1694"/>
<dbReference type="KEGG" id="wsu:WS1694"/>
<dbReference type="eggNOG" id="COG0100">
    <property type="taxonomic scope" value="Bacteria"/>
</dbReference>
<dbReference type="HOGENOM" id="CLU_072439_5_0_7"/>
<dbReference type="Proteomes" id="UP000000422">
    <property type="component" value="Chromosome"/>
</dbReference>
<dbReference type="GO" id="GO:1990904">
    <property type="term" value="C:ribonucleoprotein complex"/>
    <property type="evidence" value="ECO:0007669"/>
    <property type="project" value="UniProtKB-KW"/>
</dbReference>
<dbReference type="GO" id="GO:0005840">
    <property type="term" value="C:ribosome"/>
    <property type="evidence" value="ECO:0007669"/>
    <property type="project" value="UniProtKB-KW"/>
</dbReference>
<dbReference type="GO" id="GO:0019843">
    <property type="term" value="F:rRNA binding"/>
    <property type="evidence" value="ECO:0007669"/>
    <property type="project" value="UniProtKB-UniRule"/>
</dbReference>
<dbReference type="GO" id="GO:0003735">
    <property type="term" value="F:structural constituent of ribosome"/>
    <property type="evidence" value="ECO:0007669"/>
    <property type="project" value="InterPro"/>
</dbReference>
<dbReference type="GO" id="GO:0006412">
    <property type="term" value="P:translation"/>
    <property type="evidence" value="ECO:0007669"/>
    <property type="project" value="UniProtKB-UniRule"/>
</dbReference>
<dbReference type="FunFam" id="3.30.420.80:FF:000001">
    <property type="entry name" value="30S ribosomal protein S11"/>
    <property type="match status" value="1"/>
</dbReference>
<dbReference type="Gene3D" id="3.30.420.80">
    <property type="entry name" value="Ribosomal protein S11"/>
    <property type="match status" value="1"/>
</dbReference>
<dbReference type="HAMAP" id="MF_01310">
    <property type="entry name" value="Ribosomal_uS11"/>
    <property type="match status" value="1"/>
</dbReference>
<dbReference type="InterPro" id="IPR001971">
    <property type="entry name" value="Ribosomal_uS11"/>
</dbReference>
<dbReference type="InterPro" id="IPR019981">
    <property type="entry name" value="Ribosomal_uS11_bac-type"/>
</dbReference>
<dbReference type="InterPro" id="IPR036967">
    <property type="entry name" value="Ribosomal_uS11_sf"/>
</dbReference>
<dbReference type="NCBIfam" id="NF003698">
    <property type="entry name" value="PRK05309.1"/>
    <property type="match status" value="1"/>
</dbReference>
<dbReference type="NCBIfam" id="TIGR03632">
    <property type="entry name" value="uS11_bact"/>
    <property type="match status" value="1"/>
</dbReference>
<dbReference type="PANTHER" id="PTHR11759">
    <property type="entry name" value="40S RIBOSOMAL PROTEIN S14/30S RIBOSOMAL PROTEIN S11"/>
    <property type="match status" value="1"/>
</dbReference>
<dbReference type="Pfam" id="PF00411">
    <property type="entry name" value="Ribosomal_S11"/>
    <property type="match status" value="1"/>
</dbReference>
<dbReference type="PIRSF" id="PIRSF002131">
    <property type="entry name" value="Ribosomal_S11"/>
    <property type="match status" value="1"/>
</dbReference>
<dbReference type="SUPFAM" id="SSF53137">
    <property type="entry name" value="Translational machinery components"/>
    <property type="match status" value="1"/>
</dbReference>
<feature type="chain" id="PRO_0000123258" description="Small ribosomal subunit protein uS11">
    <location>
        <begin position="1"/>
        <end position="131"/>
    </location>
</feature>
<sequence length="131" mass="14176">MAKRKVTNKKRVVKKNIARGIIHIAATFNNTSVTITDEMGNVICWSTAGALGFKGSKKSTPYAAQQAVEDAVVKAKEHGIKELGIKVQGPGSGRETAVKSLGSIEGIKVLWFKDVTPLPHNGCRPPKRRRV</sequence>
<name>RS11_WOLSU</name>
<accession>Q7M8F5</accession>
<protein>
    <recommendedName>
        <fullName evidence="1">Small ribosomal subunit protein uS11</fullName>
    </recommendedName>
    <alternativeName>
        <fullName evidence="2">30S ribosomal protein S11</fullName>
    </alternativeName>
</protein>
<gene>
    <name evidence="1" type="primary">rpsK</name>
    <name type="ordered locus">WS1694</name>
</gene>
<keyword id="KW-1185">Reference proteome</keyword>
<keyword id="KW-0687">Ribonucleoprotein</keyword>
<keyword id="KW-0689">Ribosomal protein</keyword>
<keyword id="KW-0694">RNA-binding</keyword>
<keyword id="KW-0699">rRNA-binding</keyword>
<reference key="1">
    <citation type="journal article" date="2003" name="Proc. Natl. Acad. Sci. U.S.A.">
        <title>Complete genome sequence and analysis of Wolinella succinogenes.</title>
        <authorList>
            <person name="Baar C."/>
            <person name="Eppinger M."/>
            <person name="Raddatz G."/>
            <person name="Simon J."/>
            <person name="Lanz C."/>
            <person name="Klimmek O."/>
            <person name="Nandakumar R."/>
            <person name="Gross R."/>
            <person name="Rosinus A."/>
            <person name="Keller H."/>
            <person name="Jagtap P."/>
            <person name="Linke B."/>
            <person name="Meyer F."/>
            <person name="Lederer H."/>
            <person name="Schuster S.C."/>
        </authorList>
    </citation>
    <scope>NUCLEOTIDE SEQUENCE [LARGE SCALE GENOMIC DNA]</scope>
    <source>
        <strain>ATCC 29543 / DSM 1740 / CCUG 13145 / JCM 31913 / LMG 7466 / NCTC 11488 / FDC 602W</strain>
    </source>
</reference>
<comment type="function">
    <text evidence="1">Located on the platform of the 30S subunit, it bridges several disparate RNA helices of the 16S rRNA. Forms part of the Shine-Dalgarno cleft in the 70S ribosome.</text>
</comment>
<comment type="subunit">
    <text evidence="1">Part of the 30S ribosomal subunit. Interacts with proteins S7 and S18. Binds to IF-3.</text>
</comment>
<comment type="similarity">
    <text evidence="1">Belongs to the universal ribosomal protein uS11 family.</text>
</comment>
<organism>
    <name type="scientific">Wolinella succinogenes (strain ATCC 29543 / DSM 1740 / CCUG 13145 / JCM 31913 / LMG 7466 / NCTC 11488 / FDC 602W)</name>
    <name type="common">Vibrio succinogenes</name>
    <dbReference type="NCBI Taxonomy" id="273121"/>
    <lineage>
        <taxon>Bacteria</taxon>
        <taxon>Pseudomonadati</taxon>
        <taxon>Campylobacterota</taxon>
        <taxon>Epsilonproteobacteria</taxon>
        <taxon>Campylobacterales</taxon>
        <taxon>Helicobacteraceae</taxon>
        <taxon>Wolinella</taxon>
    </lineage>
</organism>